<organism>
    <name type="scientific">Bartonella tribocorum (strain CIP 105476 / IBS 506)</name>
    <dbReference type="NCBI Taxonomy" id="382640"/>
    <lineage>
        <taxon>Bacteria</taxon>
        <taxon>Pseudomonadati</taxon>
        <taxon>Pseudomonadota</taxon>
        <taxon>Alphaproteobacteria</taxon>
        <taxon>Hyphomicrobiales</taxon>
        <taxon>Bartonellaceae</taxon>
        <taxon>Bartonella</taxon>
    </lineage>
</organism>
<dbReference type="EC" id="5.2.1.8" evidence="1"/>
<dbReference type="EMBL" id="AM260525">
    <property type="protein sequence ID" value="CAK01285.1"/>
    <property type="molecule type" value="Genomic_DNA"/>
</dbReference>
<dbReference type="RefSeq" id="WP_012231446.1">
    <property type="nucleotide sequence ID" value="NC_010161.1"/>
</dbReference>
<dbReference type="SMR" id="A9ISC1"/>
<dbReference type="KEGG" id="btr:BT_0881"/>
<dbReference type="eggNOG" id="COG0544">
    <property type="taxonomic scope" value="Bacteria"/>
</dbReference>
<dbReference type="HOGENOM" id="CLU_033058_2_2_5"/>
<dbReference type="Proteomes" id="UP000001592">
    <property type="component" value="Chromosome"/>
</dbReference>
<dbReference type="GO" id="GO:0005737">
    <property type="term" value="C:cytoplasm"/>
    <property type="evidence" value="ECO:0007669"/>
    <property type="project" value="UniProtKB-SubCell"/>
</dbReference>
<dbReference type="GO" id="GO:0003755">
    <property type="term" value="F:peptidyl-prolyl cis-trans isomerase activity"/>
    <property type="evidence" value="ECO:0007669"/>
    <property type="project" value="UniProtKB-UniRule"/>
</dbReference>
<dbReference type="GO" id="GO:0044183">
    <property type="term" value="F:protein folding chaperone"/>
    <property type="evidence" value="ECO:0007669"/>
    <property type="project" value="TreeGrafter"/>
</dbReference>
<dbReference type="GO" id="GO:0043022">
    <property type="term" value="F:ribosome binding"/>
    <property type="evidence" value="ECO:0007669"/>
    <property type="project" value="TreeGrafter"/>
</dbReference>
<dbReference type="GO" id="GO:0051083">
    <property type="term" value="P:'de novo' cotranslational protein folding"/>
    <property type="evidence" value="ECO:0007669"/>
    <property type="project" value="TreeGrafter"/>
</dbReference>
<dbReference type="GO" id="GO:0051301">
    <property type="term" value="P:cell division"/>
    <property type="evidence" value="ECO:0007669"/>
    <property type="project" value="UniProtKB-KW"/>
</dbReference>
<dbReference type="GO" id="GO:0061077">
    <property type="term" value="P:chaperone-mediated protein folding"/>
    <property type="evidence" value="ECO:0007669"/>
    <property type="project" value="TreeGrafter"/>
</dbReference>
<dbReference type="GO" id="GO:0015031">
    <property type="term" value="P:protein transport"/>
    <property type="evidence" value="ECO:0007669"/>
    <property type="project" value="UniProtKB-UniRule"/>
</dbReference>
<dbReference type="GO" id="GO:0043335">
    <property type="term" value="P:protein unfolding"/>
    <property type="evidence" value="ECO:0007669"/>
    <property type="project" value="TreeGrafter"/>
</dbReference>
<dbReference type="FunFam" id="3.10.50.40:FF:000001">
    <property type="entry name" value="Trigger factor"/>
    <property type="match status" value="1"/>
</dbReference>
<dbReference type="Gene3D" id="3.10.50.40">
    <property type="match status" value="1"/>
</dbReference>
<dbReference type="Gene3D" id="3.30.70.1050">
    <property type="entry name" value="Trigger factor ribosome-binding domain"/>
    <property type="match status" value="1"/>
</dbReference>
<dbReference type="Gene3D" id="1.10.3120.10">
    <property type="entry name" value="Trigger factor, C-terminal domain"/>
    <property type="match status" value="1"/>
</dbReference>
<dbReference type="HAMAP" id="MF_00303">
    <property type="entry name" value="Trigger_factor_Tig"/>
    <property type="match status" value="1"/>
</dbReference>
<dbReference type="InterPro" id="IPR046357">
    <property type="entry name" value="PPIase_dom_sf"/>
</dbReference>
<dbReference type="InterPro" id="IPR001179">
    <property type="entry name" value="PPIase_FKBP_dom"/>
</dbReference>
<dbReference type="InterPro" id="IPR005215">
    <property type="entry name" value="Trig_fac"/>
</dbReference>
<dbReference type="InterPro" id="IPR008880">
    <property type="entry name" value="Trigger_fac_C"/>
</dbReference>
<dbReference type="InterPro" id="IPR037041">
    <property type="entry name" value="Trigger_fac_C_sf"/>
</dbReference>
<dbReference type="InterPro" id="IPR008881">
    <property type="entry name" value="Trigger_fac_ribosome-bd_bac"/>
</dbReference>
<dbReference type="InterPro" id="IPR036611">
    <property type="entry name" value="Trigger_fac_ribosome-bd_sf"/>
</dbReference>
<dbReference type="InterPro" id="IPR027304">
    <property type="entry name" value="Trigger_fact/SurA_dom_sf"/>
</dbReference>
<dbReference type="NCBIfam" id="TIGR00115">
    <property type="entry name" value="tig"/>
    <property type="match status" value="1"/>
</dbReference>
<dbReference type="PANTHER" id="PTHR30560">
    <property type="entry name" value="TRIGGER FACTOR CHAPERONE AND PEPTIDYL-PROLYL CIS/TRANS ISOMERASE"/>
    <property type="match status" value="1"/>
</dbReference>
<dbReference type="PANTHER" id="PTHR30560:SF3">
    <property type="entry name" value="TRIGGER FACTOR-LIKE PROTEIN TIG, CHLOROPLASTIC"/>
    <property type="match status" value="1"/>
</dbReference>
<dbReference type="Pfam" id="PF00254">
    <property type="entry name" value="FKBP_C"/>
    <property type="match status" value="1"/>
</dbReference>
<dbReference type="Pfam" id="PF05698">
    <property type="entry name" value="Trigger_C"/>
    <property type="match status" value="1"/>
</dbReference>
<dbReference type="Pfam" id="PF05697">
    <property type="entry name" value="Trigger_N"/>
    <property type="match status" value="1"/>
</dbReference>
<dbReference type="PIRSF" id="PIRSF003095">
    <property type="entry name" value="Trigger_factor"/>
    <property type="match status" value="1"/>
</dbReference>
<dbReference type="SUPFAM" id="SSF54534">
    <property type="entry name" value="FKBP-like"/>
    <property type="match status" value="1"/>
</dbReference>
<dbReference type="SUPFAM" id="SSF109998">
    <property type="entry name" value="Triger factor/SurA peptide-binding domain-like"/>
    <property type="match status" value="1"/>
</dbReference>
<dbReference type="SUPFAM" id="SSF102735">
    <property type="entry name" value="Trigger factor ribosome-binding domain"/>
    <property type="match status" value="1"/>
</dbReference>
<dbReference type="PROSITE" id="PS50059">
    <property type="entry name" value="FKBP_PPIASE"/>
    <property type="match status" value="1"/>
</dbReference>
<keyword id="KW-0131">Cell cycle</keyword>
<keyword id="KW-0132">Cell division</keyword>
<keyword id="KW-0143">Chaperone</keyword>
<keyword id="KW-0963">Cytoplasm</keyword>
<keyword id="KW-0413">Isomerase</keyword>
<keyword id="KW-0697">Rotamase</keyword>
<comment type="function">
    <text evidence="1">Involved in protein export. Acts as a chaperone by maintaining the newly synthesized protein in an open conformation. Functions as a peptidyl-prolyl cis-trans isomerase.</text>
</comment>
<comment type="catalytic activity">
    <reaction evidence="1">
        <text>[protein]-peptidylproline (omega=180) = [protein]-peptidylproline (omega=0)</text>
        <dbReference type="Rhea" id="RHEA:16237"/>
        <dbReference type="Rhea" id="RHEA-COMP:10747"/>
        <dbReference type="Rhea" id="RHEA-COMP:10748"/>
        <dbReference type="ChEBI" id="CHEBI:83833"/>
        <dbReference type="ChEBI" id="CHEBI:83834"/>
        <dbReference type="EC" id="5.2.1.8"/>
    </reaction>
</comment>
<comment type="subcellular location">
    <subcellularLocation>
        <location>Cytoplasm</location>
    </subcellularLocation>
    <text evidence="1">About half TF is bound to the ribosome near the polypeptide exit tunnel while the other half is free in the cytoplasm.</text>
</comment>
<comment type="domain">
    <text evidence="1">Consists of 3 domains; the N-terminus binds the ribosome, the middle domain has PPIase activity, while the C-terminus has intrinsic chaperone activity on its own.</text>
</comment>
<comment type="similarity">
    <text evidence="1">Belongs to the FKBP-type PPIase family. Tig subfamily.</text>
</comment>
<sequence>MQVTETLNEGLKREIKIVVPAKDLEEKLNERLDDTKGKVRLNGFRPGKVPGGHLRKMYGKSFMAEILNEILNDAPRSILADRNERPAMQPKIDIDEDEKILDGKADFTFSLKYEVLPKIEIKAFEHIEVIREIAAIPEKDIDEQVNRVLSSTRNYSLKEGSSEEGDRVTIDYLGKLEGVPFEGGADNDAQLILGSKQFIPGFEEQLVGVKAGDAKTISVKFPDNYSAVHLAGREAEFDITVKAVFRPDELKIDDEAAKKVGLESLDRLREVVRGQIESQYGSMTRQKVKRQILDALDADYNFEIPEGLLEIEFNNIWAQVNDDLKKAGRSFEDEGVTEEKAREEYHVLAQRRVRLGLVLSEIGMKVGVKVNEDELKAAVFEQVRQYPGQEKEIMDFFRKTPEAVENLRAPIFEEKVIDYLLAQIKVTDKEVTIEELMKEYDETDVPEEKPAKKKSAVKEKSAEKTSAKKKAPKKA</sequence>
<gene>
    <name evidence="1" type="primary">tig</name>
    <name type="ordered locus">BT_0881</name>
</gene>
<protein>
    <recommendedName>
        <fullName evidence="1">Trigger factor</fullName>
        <shortName evidence="1">TF</shortName>
        <ecNumber evidence="1">5.2.1.8</ecNumber>
    </recommendedName>
    <alternativeName>
        <fullName evidence="1">PPIase</fullName>
    </alternativeName>
</protein>
<reference key="1">
    <citation type="journal article" date="2007" name="Nat. Genet.">
        <title>Genomic analysis of Bartonella identifies type IV secretion systems as host adaptability factors.</title>
        <authorList>
            <person name="Saenz H.L."/>
            <person name="Engel P."/>
            <person name="Stoeckli M.C."/>
            <person name="Lanz C."/>
            <person name="Raddatz G."/>
            <person name="Vayssier-Taussat M."/>
            <person name="Birtles R."/>
            <person name="Schuster S.C."/>
            <person name="Dehio C."/>
        </authorList>
    </citation>
    <scope>NUCLEOTIDE SEQUENCE [LARGE SCALE GENOMIC DNA]</scope>
    <source>
        <strain>CIP 105476 / IBS 506</strain>
    </source>
</reference>
<accession>A9ISC1</accession>
<proteinExistence type="inferred from homology"/>
<name>TIG_BART1</name>
<evidence type="ECO:0000255" key="1">
    <source>
        <dbReference type="HAMAP-Rule" id="MF_00303"/>
    </source>
</evidence>
<evidence type="ECO:0000256" key="2">
    <source>
        <dbReference type="SAM" id="MobiDB-lite"/>
    </source>
</evidence>
<feature type="chain" id="PRO_1000079032" description="Trigger factor">
    <location>
        <begin position="1"/>
        <end position="475"/>
    </location>
</feature>
<feature type="domain" description="PPIase FKBP-type" evidence="1">
    <location>
        <begin position="165"/>
        <end position="250"/>
    </location>
</feature>
<feature type="region of interest" description="Disordered" evidence="2">
    <location>
        <begin position="439"/>
        <end position="475"/>
    </location>
</feature>
<feature type="compositionally biased region" description="Basic and acidic residues" evidence="2">
    <location>
        <begin position="439"/>
        <end position="466"/>
    </location>
</feature>